<name>IOD1_RABIT</name>
<protein>
    <recommendedName>
        <fullName>Type I iodothyronine deiodinase</fullName>
        <ecNumber evidence="7">1.21.99.3</ecNumber>
        <ecNumber evidence="7">1.21.99.4</ecNumber>
    </recommendedName>
    <alternativeName>
        <fullName>5DI</fullName>
    </alternativeName>
    <alternativeName>
        <fullName>DIOI</fullName>
    </alternativeName>
    <alternativeName>
        <fullName>Type 1 DI</fullName>
    </alternativeName>
    <alternativeName>
        <fullName>Type-I 5'-deiodinase</fullName>
    </alternativeName>
</protein>
<organism>
    <name type="scientific">Oryctolagus cuniculus</name>
    <name type="common">Rabbit</name>
    <dbReference type="NCBI Taxonomy" id="9986"/>
    <lineage>
        <taxon>Eukaryota</taxon>
        <taxon>Metazoa</taxon>
        <taxon>Chordata</taxon>
        <taxon>Craniata</taxon>
        <taxon>Vertebrata</taxon>
        <taxon>Euteleostomi</taxon>
        <taxon>Mammalia</taxon>
        <taxon>Eutheria</taxon>
        <taxon>Euarchontoglires</taxon>
        <taxon>Glires</taxon>
        <taxon>Lagomorpha</taxon>
        <taxon>Leporidae</taxon>
        <taxon>Oryctolagus</taxon>
    </lineage>
</organism>
<keyword id="KW-1003">Cell membrane</keyword>
<keyword id="KW-0256">Endoplasmic reticulum</keyword>
<keyword id="KW-0472">Membrane</keyword>
<keyword id="KW-0560">Oxidoreductase</keyword>
<keyword id="KW-1185">Reference proteome</keyword>
<keyword id="KW-0712">Selenocysteine</keyword>
<keyword id="KW-0893">Thyroid hormones biosynthesis</keyword>
<keyword id="KW-0812">Transmembrane</keyword>
<keyword id="KW-1133">Transmembrane helix</keyword>
<sequence length="249" mass="28526">MGLPRPGLWLKRLWVLVQVAVEVAVGKVLMTLFPERVKQNILAMGQKTGIAQNPNFAQDSWIPTFFSTQYFWFVLKVRWQRLEDATEPGGLAPNCSVVRLSGQQCSVWDFMRGNRPLVLNFGSCTUPSFLSKFDQFKRLIQDFSSIADFLIIYIEEAHASDGWAFKNNVDIKNHRNLQDRLRAASLLLARSPQCPVVVDTMQNQSSQLYAALPERLYVLRQGRILYKGESGPWNYNPEEVRAVLEELHS</sequence>
<dbReference type="EC" id="1.21.99.3" evidence="7"/>
<dbReference type="EC" id="1.21.99.4" evidence="7"/>
<dbReference type="EMBL" id="EF428025">
    <property type="protein sequence ID" value="ABO21318.1"/>
    <property type="molecule type" value="mRNA"/>
</dbReference>
<dbReference type="RefSeq" id="NP_001093428.1">
    <property type="nucleotide sequence ID" value="NM_001099958.1"/>
</dbReference>
<dbReference type="FunCoup" id="A4GT88">
    <property type="interactions" value="1"/>
</dbReference>
<dbReference type="STRING" id="9986.ENSOCUP00000007619"/>
<dbReference type="PaxDb" id="9986-ENSOCUP00000007619"/>
<dbReference type="GeneID" id="100101570"/>
<dbReference type="KEGG" id="ocu:100101570"/>
<dbReference type="CTD" id="1733"/>
<dbReference type="eggNOG" id="ENOG502QUGZ">
    <property type="taxonomic scope" value="Eukaryota"/>
</dbReference>
<dbReference type="InParanoid" id="A4GT88"/>
<dbReference type="OrthoDB" id="428577at2759"/>
<dbReference type="Proteomes" id="UP000001811">
    <property type="component" value="Unplaced"/>
</dbReference>
<dbReference type="GO" id="GO:0016323">
    <property type="term" value="C:basolateral plasma membrane"/>
    <property type="evidence" value="ECO:0007669"/>
    <property type="project" value="UniProtKB-SubCell"/>
</dbReference>
<dbReference type="GO" id="GO:0005789">
    <property type="term" value="C:endoplasmic reticulum membrane"/>
    <property type="evidence" value="ECO:0007669"/>
    <property type="project" value="UniProtKB-SubCell"/>
</dbReference>
<dbReference type="GO" id="GO:0004800">
    <property type="term" value="F:thyroxine 5'-deiodinase activity"/>
    <property type="evidence" value="ECO:0000314"/>
    <property type="project" value="UniProtKB"/>
</dbReference>
<dbReference type="GO" id="GO:0033798">
    <property type="term" value="F:thyroxine 5-deiodinase activity"/>
    <property type="evidence" value="ECO:0000314"/>
    <property type="project" value="UniProtKB"/>
</dbReference>
<dbReference type="GO" id="GO:0042446">
    <property type="term" value="P:hormone biosynthetic process"/>
    <property type="evidence" value="ECO:0007669"/>
    <property type="project" value="UniProtKB-KW"/>
</dbReference>
<dbReference type="GO" id="GO:0042404">
    <property type="term" value="P:thyroid hormone catabolic process"/>
    <property type="evidence" value="ECO:0000314"/>
    <property type="project" value="UniProtKB"/>
</dbReference>
<dbReference type="FunFam" id="3.40.30.10:FF:000192">
    <property type="entry name" value="Iodothyronine deiodinase"/>
    <property type="match status" value="1"/>
</dbReference>
<dbReference type="Gene3D" id="3.40.30.10">
    <property type="entry name" value="Glutaredoxin"/>
    <property type="match status" value="1"/>
</dbReference>
<dbReference type="InterPro" id="IPR000643">
    <property type="entry name" value="Iodothyronine_deiodinase"/>
</dbReference>
<dbReference type="InterPro" id="IPR008261">
    <property type="entry name" value="Iodothyronine_deiodinase_AS"/>
</dbReference>
<dbReference type="InterPro" id="IPR027252">
    <property type="entry name" value="Iodothyronine_deiodinase_I/III"/>
</dbReference>
<dbReference type="InterPro" id="IPR036249">
    <property type="entry name" value="Thioredoxin-like_sf"/>
</dbReference>
<dbReference type="PANTHER" id="PTHR11781">
    <property type="entry name" value="IODOTHYRONINE DEIODINASE"/>
    <property type="match status" value="1"/>
</dbReference>
<dbReference type="PANTHER" id="PTHR11781:SF22">
    <property type="entry name" value="TYPE I IODOTHYRONINE DEIODINASE"/>
    <property type="match status" value="1"/>
</dbReference>
<dbReference type="Pfam" id="PF00837">
    <property type="entry name" value="T4_deiodinase"/>
    <property type="match status" value="1"/>
</dbReference>
<dbReference type="PIRSF" id="PIRSF001330">
    <property type="entry name" value="IOD"/>
    <property type="match status" value="1"/>
</dbReference>
<dbReference type="PIRSF" id="PIRSF500144">
    <property type="entry name" value="IODI_III"/>
    <property type="match status" value="1"/>
</dbReference>
<dbReference type="SUPFAM" id="SSF52833">
    <property type="entry name" value="Thioredoxin-like"/>
    <property type="match status" value="1"/>
</dbReference>
<dbReference type="PROSITE" id="PS01205">
    <property type="entry name" value="T4_DEIODINASE"/>
    <property type="match status" value="1"/>
</dbReference>
<comment type="function">
    <text evidence="1 2 3 4 7">Plays a crucial role in the metabolism of thyroid hormones (TH) and has specific roles in TH activation and inactivation by deiodination (PubMed:18466079). Catalyzes the deiodination of L-thyroxine (T4) to 3,5,3'-triiodothyronine (T3) via outer-ring deiodination (ORD) and of T4 to 3,3',5'-triiodothyronine (rT3) via inner-ring deiodination (IRD)(PubMed:18466079). Catalyzes the deiodiantion of rT3 to 3,3'-diiodothyronine (3,3'-T2) and 3',5'-diiodothyronine (3',5'-T2) to 3'-monoiodothyronine (3'-T1) via ORD (By similarity). Catalyzes the deiodination of T3 to 3,3'-T2, 3,5-diiodothyronine (3,5-T2) to 3-monoiodothyronine (3-T1) and 3,3'-T2 to 3-T1 via IRD (By similarity). Catalyzes the phenolic ring deiodinations of 3,3',5'-triiodothyronamine, 3',5'-diiodothyronamine and 3,3'-diiodothyronamine as well as tyrosyl ring deiodinations of 3,5,3'-triiodothyronamine and 3,5-diiodothyronamine (By similarity). Catalyzes the deiodination of L-thyroxine sulfate and 3,3',5-triiodo-L-thyronine sulfate via IRD and of 3,3',5'-triiodo-L-thyronine sulfate via ORD (By similarity).</text>
</comment>
<comment type="catalytic activity">
    <reaction evidence="6 7">
        <text>3,3',5-triiodo-L-thyronine + iodide + A + H(+) = L-thyroxine + AH2</text>
        <dbReference type="Rhea" id="RHEA:19745"/>
        <dbReference type="ChEBI" id="CHEBI:13193"/>
        <dbReference type="ChEBI" id="CHEBI:15378"/>
        <dbReference type="ChEBI" id="CHEBI:16382"/>
        <dbReference type="ChEBI" id="CHEBI:17499"/>
        <dbReference type="ChEBI" id="CHEBI:58448"/>
        <dbReference type="ChEBI" id="CHEBI:533015"/>
        <dbReference type="EC" id="1.21.99.4"/>
    </reaction>
    <physiologicalReaction direction="right-to-left" evidence="9">
        <dbReference type="Rhea" id="RHEA:19747"/>
    </physiologicalReaction>
</comment>
<comment type="catalytic activity">
    <reaction evidence="7">
        <text>3,3',5'-triiodo-L-thyronine + iodide + A + H(+) = L-thyroxine + AH2</text>
        <dbReference type="Rhea" id="RHEA:18897"/>
        <dbReference type="ChEBI" id="CHEBI:13193"/>
        <dbReference type="ChEBI" id="CHEBI:15378"/>
        <dbReference type="ChEBI" id="CHEBI:16382"/>
        <dbReference type="ChEBI" id="CHEBI:17499"/>
        <dbReference type="ChEBI" id="CHEBI:57261"/>
        <dbReference type="ChEBI" id="CHEBI:58448"/>
        <dbReference type="EC" id="1.21.99.3"/>
    </reaction>
    <physiologicalReaction direction="right-to-left" evidence="9">
        <dbReference type="Rhea" id="RHEA:18899"/>
    </physiologicalReaction>
</comment>
<comment type="catalytic activity">
    <reaction evidence="3">
        <text>3,3'-diiodo-L-thyronine + iodide + A + H(+) = 3,3',5'-triiodo-L-thyronine + AH2</text>
        <dbReference type="Rhea" id="RHEA:82575"/>
        <dbReference type="ChEBI" id="CHEBI:13193"/>
        <dbReference type="ChEBI" id="CHEBI:15378"/>
        <dbReference type="ChEBI" id="CHEBI:16382"/>
        <dbReference type="ChEBI" id="CHEBI:17499"/>
        <dbReference type="ChEBI" id="CHEBI:57261"/>
        <dbReference type="ChEBI" id="CHEBI:176514"/>
    </reaction>
    <physiologicalReaction direction="right-to-left" evidence="3">
        <dbReference type="Rhea" id="RHEA:82577"/>
    </physiologicalReaction>
</comment>
<comment type="catalytic activity">
    <reaction evidence="3">
        <text>3,3'-diiodo-L-thyronine + iodide + A + H(+) = 3,3',5-triiodo-L-thyronine + AH2</text>
        <dbReference type="Rhea" id="RHEA:82571"/>
        <dbReference type="ChEBI" id="CHEBI:13193"/>
        <dbReference type="ChEBI" id="CHEBI:15378"/>
        <dbReference type="ChEBI" id="CHEBI:16382"/>
        <dbReference type="ChEBI" id="CHEBI:17499"/>
        <dbReference type="ChEBI" id="CHEBI:176514"/>
        <dbReference type="ChEBI" id="CHEBI:533015"/>
    </reaction>
    <physiologicalReaction direction="right-to-left" evidence="3">
        <dbReference type="Rhea" id="RHEA:82573"/>
    </physiologicalReaction>
</comment>
<comment type="catalytic activity">
    <reaction evidence="2">
        <text>3'-iodo-L-thyronine + iodide + A + H(+) = 3',5'-diiodo-L-thyronine + AH2</text>
        <dbReference type="Rhea" id="RHEA:82899"/>
        <dbReference type="ChEBI" id="CHEBI:13193"/>
        <dbReference type="ChEBI" id="CHEBI:15378"/>
        <dbReference type="ChEBI" id="CHEBI:16382"/>
        <dbReference type="ChEBI" id="CHEBI:17499"/>
        <dbReference type="ChEBI" id="CHEBI:195762"/>
        <dbReference type="ChEBI" id="CHEBI:232695"/>
    </reaction>
    <physiologicalReaction direction="right-to-left" evidence="2">
        <dbReference type="Rhea" id="RHEA:82901"/>
    </physiologicalReaction>
</comment>
<comment type="catalytic activity">
    <reaction evidence="4">
        <text>3-iodo-L-thyronine + iodide + A + H(+) = 3,5-diiodo-L-thyronine + AH2</text>
        <dbReference type="Rhea" id="RHEA:82895"/>
        <dbReference type="ChEBI" id="CHEBI:13193"/>
        <dbReference type="ChEBI" id="CHEBI:15378"/>
        <dbReference type="ChEBI" id="CHEBI:16382"/>
        <dbReference type="ChEBI" id="CHEBI:17499"/>
        <dbReference type="ChEBI" id="CHEBI:232626"/>
        <dbReference type="ChEBI" id="CHEBI:232627"/>
    </reaction>
    <physiologicalReaction direction="right-to-left" evidence="4">
        <dbReference type="Rhea" id="RHEA:82897"/>
    </physiologicalReaction>
</comment>
<comment type="catalytic activity">
    <reaction evidence="4">
        <text>3-iodo-L-thyronine + iodide + A + H(+) = 3,3'-diiodo-L-thyronine + AH2</text>
        <dbReference type="Rhea" id="RHEA:83783"/>
        <dbReference type="ChEBI" id="CHEBI:13193"/>
        <dbReference type="ChEBI" id="CHEBI:15378"/>
        <dbReference type="ChEBI" id="CHEBI:16382"/>
        <dbReference type="ChEBI" id="CHEBI:17499"/>
        <dbReference type="ChEBI" id="CHEBI:176514"/>
        <dbReference type="ChEBI" id="CHEBI:232627"/>
    </reaction>
    <physiologicalReaction direction="right-to-left" evidence="4">
        <dbReference type="Rhea" id="RHEA:83785"/>
    </physiologicalReaction>
</comment>
<comment type="catalytic activity">
    <reaction evidence="4">
        <text>3,3'-diiodothyronamine + iodide + A + H(+) = 3,3',5'-triiodothyronamine + AH2</text>
        <dbReference type="Rhea" id="RHEA:83795"/>
        <dbReference type="ChEBI" id="CHEBI:13193"/>
        <dbReference type="ChEBI" id="CHEBI:15378"/>
        <dbReference type="ChEBI" id="CHEBI:16382"/>
        <dbReference type="ChEBI" id="CHEBI:17499"/>
        <dbReference type="ChEBI" id="CHEBI:233341"/>
        <dbReference type="ChEBI" id="CHEBI:233343"/>
    </reaction>
    <physiologicalReaction direction="right-to-left" evidence="4">
        <dbReference type="Rhea" id="RHEA:83797"/>
    </physiologicalReaction>
</comment>
<comment type="catalytic activity">
    <reaction evidence="4">
        <text>3'-iodothyronamine + iodide + A + H(+) = 3',5'-diiodothyronamine + AH2</text>
        <dbReference type="Rhea" id="RHEA:83803"/>
        <dbReference type="ChEBI" id="CHEBI:13193"/>
        <dbReference type="ChEBI" id="CHEBI:15378"/>
        <dbReference type="ChEBI" id="CHEBI:16382"/>
        <dbReference type="ChEBI" id="CHEBI:17499"/>
        <dbReference type="ChEBI" id="CHEBI:233339"/>
        <dbReference type="ChEBI" id="CHEBI:233342"/>
    </reaction>
    <physiologicalReaction direction="right-to-left" evidence="4">
        <dbReference type="Rhea" id="RHEA:83805"/>
    </physiologicalReaction>
</comment>
<comment type="catalytic activity">
    <reaction evidence="4">
        <text>3-iodothyronamine + iodide + A + H(+) = 3,3'-diiodothyronamine + AH2</text>
        <dbReference type="Rhea" id="RHEA:83827"/>
        <dbReference type="ChEBI" id="CHEBI:13193"/>
        <dbReference type="ChEBI" id="CHEBI:15378"/>
        <dbReference type="ChEBI" id="CHEBI:16382"/>
        <dbReference type="ChEBI" id="CHEBI:17499"/>
        <dbReference type="ChEBI" id="CHEBI:231647"/>
        <dbReference type="ChEBI" id="CHEBI:233341"/>
    </reaction>
    <physiologicalReaction direction="right-to-left" evidence="4">
        <dbReference type="Rhea" id="RHEA:83829"/>
    </physiologicalReaction>
</comment>
<comment type="catalytic activity">
    <reaction evidence="4">
        <text>3,3'-diiodothyronamine + iodide + A + H(+) = 3,3',5-triiodothyronamine + AH2</text>
        <dbReference type="Rhea" id="RHEA:83811"/>
        <dbReference type="ChEBI" id="CHEBI:13193"/>
        <dbReference type="ChEBI" id="CHEBI:15378"/>
        <dbReference type="ChEBI" id="CHEBI:16382"/>
        <dbReference type="ChEBI" id="CHEBI:17499"/>
        <dbReference type="ChEBI" id="CHEBI:233341"/>
        <dbReference type="ChEBI" id="CHEBI:233426"/>
    </reaction>
    <physiologicalReaction direction="right-to-left" evidence="4">
        <dbReference type="Rhea" id="RHEA:83813"/>
    </physiologicalReaction>
</comment>
<comment type="catalytic activity">
    <reaction evidence="4">
        <text>3-iodothyronamine + iodide + A + H(+) = 3,5-diiodothyronamine + AH2</text>
        <dbReference type="Rhea" id="RHEA:83823"/>
        <dbReference type="ChEBI" id="CHEBI:13193"/>
        <dbReference type="ChEBI" id="CHEBI:15378"/>
        <dbReference type="ChEBI" id="CHEBI:16382"/>
        <dbReference type="ChEBI" id="CHEBI:17499"/>
        <dbReference type="ChEBI" id="CHEBI:231647"/>
        <dbReference type="ChEBI" id="CHEBI:233340"/>
    </reaction>
    <physiologicalReaction direction="right-to-left" evidence="4">
        <dbReference type="Rhea" id="RHEA:83825"/>
    </physiologicalReaction>
</comment>
<comment type="catalytic activity">
    <reaction evidence="1">
        <text>3,3'-diiodo-L-thyronine sulfate + iodide + A + H(+) = 3,3',5'-triiodo-L-thyronine sulfate + AH2</text>
        <dbReference type="Rhea" id="RHEA:83831"/>
        <dbReference type="ChEBI" id="CHEBI:13193"/>
        <dbReference type="ChEBI" id="CHEBI:15378"/>
        <dbReference type="ChEBI" id="CHEBI:16382"/>
        <dbReference type="ChEBI" id="CHEBI:17499"/>
        <dbReference type="ChEBI" id="CHEBI:176513"/>
        <dbReference type="ChEBI" id="CHEBI:176515"/>
    </reaction>
    <physiologicalReaction direction="right-to-left" evidence="1">
        <dbReference type="Rhea" id="RHEA:83833"/>
    </physiologicalReaction>
</comment>
<comment type="catalytic activity">
    <reaction evidence="1">
        <text>3,3',5'-triiodo-L-thyronine sulfate + iodide + A + H(+) = L-thyroxine sulfate + AH2</text>
        <dbReference type="Rhea" id="RHEA:83835"/>
        <dbReference type="ChEBI" id="CHEBI:13193"/>
        <dbReference type="ChEBI" id="CHEBI:15378"/>
        <dbReference type="ChEBI" id="CHEBI:16382"/>
        <dbReference type="ChEBI" id="CHEBI:17499"/>
        <dbReference type="ChEBI" id="CHEBI:176512"/>
        <dbReference type="ChEBI" id="CHEBI:176513"/>
    </reaction>
    <physiologicalReaction direction="right-to-left" evidence="1">
        <dbReference type="Rhea" id="RHEA:83837"/>
    </physiologicalReaction>
</comment>
<comment type="catalytic activity">
    <reaction evidence="1">
        <text>3,3'-diiodo-L-thyronine sulfate + iodide + A + H(+) = 3,3',5-triiodo-L-thyronine sulfate + AH2</text>
        <dbReference type="Rhea" id="RHEA:83751"/>
        <dbReference type="ChEBI" id="CHEBI:13193"/>
        <dbReference type="ChEBI" id="CHEBI:15378"/>
        <dbReference type="ChEBI" id="CHEBI:16382"/>
        <dbReference type="ChEBI" id="CHEBI:17499"/>
        <dbReference type="ChEBI" id="CHEBI:176511"/>
        <dbReference type="ChEBI" id="CHEBI:176515"/>
    </reaction>
    <physiologicalReaction direction="right-to-left" evidence="1">
        <dbReference type="Rhea" id="RHEA:83753"/>
    </physiologicalReaction>
</comment>
<comment type="subunit">
    <text evidence="2">Predominantly monomer. Can form homodimers but homodimerization is not essential for enzyme activity.</text>
</comment>
<comment type="subcellular location">
    <subcellularLocation>
        <location evidence="1">Cell membrane</location>
        <topology evidence="1">Single-pass type III membrane protein</topology>
    </subcellularLocation>
    <subcellularLocation>
        <location evidence="1">Endoplasmic reticulum membrane</location>
        <topology evidence="1">Single-pass type III membrane protein</topology>
    </subcellularLocation>
    <subcellularLocation>
        <location evidence="1">Basolateral cell membrane</location>
        <topology evidence="1">Single-pass type III membrane protein</topology>
    </subcellularLocation>
</comment>
<comment type="similarity">
    <text evidence="8">Belongs to the iodothyronine deiodinase family.</text>
</comment>
<feature type="chain" id="PRO_0000318639" description="Type I iodothyronine deiodinase">
    <location>
        <begin position="1"/>
        <end position="249"/>
    </location>
</feature>
<feature type="topological domain" description="Extracellular" evidence="1">
    <location>
        <begin position="1"/>
        <end position="12"/>
    </location>
</feature>
<feature type="transmembrane region" description="Helical; Signal-anchor for type III membrane protein" evidence="5">
    <location>
        <begin position="13"/>
        <end position="33"/>
    </location>
</feature>
<feature type="topological domain" description="Cytoplasmic" evidence="1">
    <location>
        <begin position="34"/>
        <end position="249"/>
    </location>
</feature>
<feature type="active site" evidence="1">
    <location>
        <position position="126"/>
    </location>
</feature>
<feature type="non-standard amino acid" description="Selenocysteine" evidence="1">
    <location>
        <position position="126"/>
    </location>
</feature>
<gene>
    <name type="primary">DIO1</name>
</gene>
<accession>A4GT88</accession>
<reference key="1">
    <citation type="journal article" date="2008" name="Thyroid">
        <title>Regulation of tissue iodothyronine deiodinase activity in a model of prolonged critical illness.</title>
        <authorList>
            <person name="Debaveye Y."/>
            <person name="Ellger B."/>
            <person name="Mebis L."/>
            <person name="Darras V.M."/>
            <person name="Van den Berghe G."/>
        </authorList>
    </citation>
    <scope>NUCLEOTIDE SEQUENCE [MRNA]</scope>
    <scope>FUNCTION</scope>
    <scope>CATALYTIC ACTIVITY</scope>
</reference>
<proteinExistence type="evidence at protein level"/>
<evidence type="ECO:0000250" key="1">
    <source>
        <dbReference type="UniProtKB" id="P24389"/>
    </source>
</evidence>
<evidence type="ECO:0000250" key="2">
    <source>
        <dbReference type="UniProtKB" id="P49895"/>
    </source>
</evidence>
<evidence type="ECO:0000250" key="3">
    <source>
        <dbReference type="UniProtKB" id="Q2QEI3"/>
    </source>
</evidence>
<evidence type="ECO:0000250" key="4">
    <source>
        <dbReference type="UniProtKB" id="Q61153"/>
    </source>
</evidence>
<evidence type="ECO:0000255" key="5"/>
<evidence type="ECO:0000255" key="6">
    <source>
        <dbReference type="PROSITE-ProRule" id="PRU10107"/>
    </source>
</evidence>
<evidence type="ECO:0000269" key="7">
    <source>
    </source>
</evidence>
<evidence type="ECO:0000305" key="8"/>
<evidence type="ECO:0000305" key="9">
    <source>
    </source>
</evidence>